<reference key="1">
    <citation type="journal article" date="2002" name="Nature">
        <title>The genome sequence of Schizosaccharomyces pombe.</title>
        <authorList>
            <person name="Wood V."/>
            <person name="Gwilliam R."/>
            <person name="Rajandream M.A."/>
            <person name="Lyne M.H."/>
            <person name="Lyne R."/>
            <person name="Stewart A."/>
            <person name="Sgouros J.G."/>
            <person name="Peat N."/>
            <person name="Hayles J."/>
            <person name="Baker S.G."/>
            <person name="Basham D."/>
            <person name="Bowman S."/>
            <person name="Brooks K."/>
            <person name="Brown D."/>
            <person name="Brown S."/>
            <person name="Chillingworth T."/>
            <person name="Churcher C.M."/>
            <person name="Collins M."/>
            <person name="Connor R."/>
            <person name="Cronin A."/>
            <person name="Davis P."/>
            <person name="Feltwell T."/>
            <person name="Fraser A."/>
            <person name="Gentles S."/>
            <person name="Goble A."/>
            <person name="Hamlin N."/>
            <person name="Harris D.E."/>
            <person name="Hidalgo J."/>
            <person name="Hodgson G."/>
            <person name="Holroyd S."/>
            <person name="Hornsby T."/>
            <person name="Howarth S."/>
            <person name="Huckle E.J."/>
            <person name="Hunt S."/>
            <person name="Jagels K."/>
            <person name="James K.D."/>
            <person name="Jones L."/>
            <person name="Jones M."/>
            <person name="Leather S."/>
            <person name="McDonald S."/>
            <person name="McLean J."/>
            <person name="Mooney P."/>
            <person name="Moule S."/>
            <person name="Mungall K.L."/>
            <person name="Murphy L.D."/>
            <person name="Niblett D."/>
            <person name="Odell C."/>
            <person name="Oliver K."/>
            <person name="O'Neil S."/>
            <person name="Pearson D."/>
            <person name="Quail M.A."/>
            <person name="Rabbinowitsch E."/>
            <person name="Rutherford K.M."/>
            <person name="Rutter S."/>
            <person name="Saunders D."/>
            <person name="Seeger K."/>
            <person name="Sharp S."/>
            <person name="Skelton J."/>
            <person name="Simmonds M.N."/>
            <person name="Squares R."/>
            <person name="Squares S."/>
            <person name="Stevens K."/>
            <person name="Taylor K."/>
            <person name="Taylor R.G."/>
            <person name="Tivey A."/>
            <person name="Walsh S.V."/>
            <person name="Warren T."/>
            <person name="Whitehead S."/>
            <person name="Woodward J.R."/>
            <person name="Volckaert G."/>
            <person name="Aert R."/>
            <person name="Robben J."/>
            <person name="Grymonprez B."/>
            <person name="Weltjens I."/>
            <person name="Vanstreels E."/>
            <person name="Rieger M."/>
            <person name="Schaefer M."/>
            <person name="Mueller-Auer S."/>
            <person name="Gabel C."/>
            <person name="Fuchs M."/>
            <person name="Duesterhoeft A."/>
            <person name="Fritzc C."/>
            <person name="Holzer E."/>
            <person name="Moestl D."/>
            <person name="Hilbert H."/>
            <person name="Borzym K."/>
            <person name="Langer I."/>
            <person name="Beck A."/>
            <person name="Lehrach H."/>
            <person name="Reinhardt R."/>
            <person name="Pohl T.M."/>
            <person name="Eger P."/>
            <person name="Zimmermann W."/>
            <person name="Wedler H."/>
            <person name="Wambutt R."/>
            <person name="Purnelle B."/>
            <person name="Goffeau A."/>
            <person name="Cadieu E."/>
            <person name="Dreano S."/>
            <person name="Gloux S."/>
            <person name="Lelaure V."/>
            <person name="Mottier S."/>
            <person name="Galibert F."/>
            <person name="Aves S.J."/>
            <person name="Xiang Z."/>
            <person name="Hunt C."/>
            <person name="Moore K."/>
            <person name="Hurst S.M."/>
            <person name="Lucas M."/>
            <person name="Rochet M."/>
            <person name="Gaillardin C."/>
            <person name="Tallada V.A."/>
            <person name="Garzon A."/>
            <person name="Thode G."/>
            <person name="Daga R.R."/>
            <person name="Cruzado L."/>
            <person name="Jimenez J."/>
            <person name="Sanchez M."/>
            <person name="del Rey F."/>
            <person name="Benito J."/>
            <person name="Dominguez A."/>
            <person name="Revuelta J.L."/>
            <person name="Moreno S."/>
            <person name="Armstrong J."/>
            <person name="Forsburg S.L."/>
            <person name="Cerutti L."/>
            <person name="Lowe T."/>
            <person name="McCombie W.R."/>
            <person name="Paulsen I."/>
            <person name="Potashkin J."/>
            <person name="Shpakovski G.V."/>
            <person name="Ussery D."/>
            <person name="Barrell B.G."/>
            <person name="Nurse P."/>
        </authorList>
    </citation>
    <scope>NUCLEOTIDE SEQUENCE [LARGE SCALE GENOMIC DNA]</scope>
    <source>
        <strain>972 / ATCC 24843</strain>
    </source>
</reference>
<accession>O13783</accession>
<evidence type="ECO:0000250" key="1"/>
<evidence type="ECO:0000255" key="2"/>
<evidence type="ECO:0000255" key="3">
    <source>
        <dbReference type="PROSITE-ProRule" id="PRU00526"/>
    </source>
</evidence>
<evidence type="ECO:0000256" key="4">
    <source>
        <dbReference type="SAM" id="MobiDB-lite"/>
    </source>
</evidence>
<evidence type="ECO:0000305" key="5"/>
<sequence length="775" mass="86622">MEKLATPFFYLNKKETKHSDWVEPFTTFVSRIYGNSVDVEDQIKAFNTLRENAADVDDTVAGKDILYSYYGQLDYLSFRFPTGGNGINISFEWSDILDPDADFVKQSSLAFEKASVLFNLVSLLSRMAANHASAYTVDDYKAAANCLQCASGIAKLLRESFIHAPGRDLDSNFLLGIYNLFLGQAQECVLGHMSFSASDSNMNYSLAAKIASSAATLYDSCVHAFESMEPACNPNFIRLASAKKAALEGFSSYFMARAQLEKSKQGLAIGYLQQAKSILSSAQKLFNGIKLSTDFIHKPSLSDYPQTISTFIKSSLSHLLKTAEKDNDFVFHDLVVKEVELPKISPLQALPPLPLEKLYGSQDGFETAKKIVGDDLFKAFVPSAVTTASSLYSEETAKVFRAEQAEVERQNTQMATVFASLDLSRLQEITHSDSKTNFIPKELIEARSQLISFNPTFKIHELFAKSTKLKQIIAKIKSDLEVEANENAKMKAKLGPSWTLSDSLEFAAPYQSELNNYLKTLAEASATDSAISQQYALVKDDVETLCNSSKISALLESSISSTDNSGQSLLDIPIEQEEQERDMKIQLDLLEELQSRVQKLVPERQTTLQALQQKCLQDDISESLMQNSKRKDSALDTNQLFELELKKFDPLRNRLHASYRQQQLLLNEMRNVTQKLKQNPEFLRKMEVYNNQFSKNKELCSNLLSSSLTAKAISEGVSKGLEYYKTVEQRLAEINKTLGEQLLLRRKQGATCLSKLSSSSSSHTSISSNMRNLHI</sequence>
<keyword id="KW-0175">Coiled coil</keyword>
<keyword id="KW-0963">Cytoplasm</keyword>
<keyword id="KW-0967">Endosome</keyword>
<keyword id="KW-0653">Protein transport</keyword>
<keyword id="KW-1185">Reference proteome</keyword>
<keyword id="KW-0813">Transport</keyword>
<organism>
    <name type="scientific">Schizosaccharomyces pombe (strain 972 / ATCC 24843)</name>
    <name type="common">Fission yeast</name>
    <dbReference type="NCBI Taxonomy" id="284812"/>
    <lineage>
        <taxon>Eukaryota</taxon>
        <taxon>Fungi</taxon>
        <taxon>Dikarya</taxon>
        <taxon>Ascomycota</taxon>
        <taxon>Taphrinomycotina</taxon>
        <taxon>Schizosaccharomycetes</taxon>
        <taxon>Schizosaccharomycetales</taxon>
        <taxon>Schizosaccharomycetaceae</taxon>
        <taxon>Schizosaccharomyces</taxon>
    </lineage>
</organism>
<gene>
    <name type="primary">bro1</name>
    <name type="ORF">SPAC17G6.05c</name>
</gene>
<name>BRO1_SCHPO</name>
<proteinExistence type="inferred from homology"/>
<protein>
    <recommendedName>
        <fullName>Vacuolar protein-sorting protein bro1</fullName>
    </recommendedName>
    <alternativeName>
        <fullName>BRO domain-containing protein 1</fullName>
    </alternativeName>
</protein>
<dbReference type="EMBL" id="CU329670">
    <property type="protein sequence ID" value="CAB16216.1"/>
    <property type="molecule type" value="Genomic_DNA"/>
</dbReference>
<dbReference type="PIR" id="T37837">
    <property type="entry name" value="T37837"/>
</dbReference>
<dbReference type="RefSeq" id="NP_594252.1">
    <property type="nucleotide sequence ID" value="NM_001019675.2"/>
</dbReference>
<dbReference type="SMR" id="O13783"/>
<dbReference type="BioGRID" id="278882">
    <property type="interactions" value="21"/>
</dbReference>
<dbReference type="FunCoup" id="O13783">
    <property type="interactions" value="375"/>
</dbReference>
<dbReference type="STRING" id="284812.O13783"/>
<dbReference type="iPTMnet" id="O13783"/>
<dbReference type="PaxDb" id="4896-SPAC17G6.05c.1"/>
<dbReference type="EnsemblFungi" id="SPAC17G6.05c.1">
    <property type="protein sequence ID" value="SPAC17G6.05c.1:pep"/>
    <property type="gene ID" value="SPAC17G6.05c"/>
</dbReference>
<dbReference type="GeneID" id="2542419"/>
<dbReference type="KEGG" id="spo:2542419"/>
<dbReference type="PomBase" id="SPAC17G6.05c">
    <property type="gene designation" value="bro1"/>
</dbReference>
<dbReference type="VEuPathDB" id="FungiDB:SPAC17G6.05c"/>
<dbReference type="eggNOG" id="KOG2220">
    <property type="taxonomic scope" value="Eukaryota"/>
</dbReference>
<dbReference type="HOGENOM" id="CLU_360983_0_0_1"/>
<dbReference type="InParanoid" id="O13783"/>
<dbReference type="OMA" id="YLKRSYG"/>
<dbReference type="PhylomeDB" id="O13783"/>
<dbReference type="PRO" id="PR:O13783"/>
<dbReference type="Proteomes" id="UP000002485">
    <property type="component" value="Chromosome I"/>
</dbReference>
<dbReference type="GO" id="GO:0005768">
    <property type="term" value="C:endosome"/>
    <property type="evidence" value="ECO:0000318"/>
    <property type="project" value="GO_Central"/>
</dbReference>
<dbReference type="GO" id="GO:0043328">
    <property type="term" value="P:protein transport to vacuole involved in ubiquitin-dependent protein catabolic process via the multivesicular body sorting pathway"/>
    <property type="evidence" value="ECO:0000318"/>
    <property type="project" value="GO_Central"/>
</dbReference>
<dbReference type="CDD" id="cd09237">
    <property type="entry name" value="V_ScBro1_like"/>
    <property type="match status" value="1"/>
</dbReference>
<dbReference type="Gene3D" id="1.20.120.560">
    <property type="entry name" value="alix/aip1 in complex with the ypdl late domain"/>
    <property type="match status" value="1"/>
</dbReference>
<dbReference type="Gene3D" id="1.20.140.50">
    <property type="entry name" value="alix/aip1 like domains"/>
    <property type="match status" value="1"/>
</dbReference>
<dbReference type="Gene3D" id="1.25.40.280">
    <property type="entry name" value="alix/aip1 like domains"/>
    <property type="match status" value="1"/>
</dbReference>
<dbReference type="InterPro" id="IPR025304">
    <property type="entry name" value="ALIX_V_dom"/>
</dbReference>
<dbReference type="InterPro" id="IPR004328">
    <property type="entry name" value="BRO1_dom"/>
</dbReference>
<dbReference type="InterPro" id="IPR038499">
    <property type="entry name" value="BRO1_sf"/>
</dbReference>
<dbReference type="PANTHER" id="PTHR23030">
    <property type="entry name" value="PCD6 INTERACTING PROTEIN-RELATED"/>
    <property type="match status" value="1"/>
</dbReference>
<dbReference type="PANTHER" id="PTHR23030:SF30">
    <property type="entry name" value="TYROSINE-PROTEIN PHOSPHATASE NON-RECEPTOR TYPE 23"/>
    <property type="match status" value="1"/>
</dbReference>
<dbReference type="Pfam" id="PF13949">
    <property type="entry name" value="ALIX_LYPXL_bnd"/>
    <property type="match status" value="1"/>
</dbReference>
<dbReference type="Pfam" id="PF03097">
    <property type="entry name" value="BRO1"/>
    <property type="match status" value="1"/>
</dbReference>
<dbReference type="SMART" id="SM01041">
    <property type="entry name" value="BRO1"/>
    <property type="match status" value="1"/>
</dbReference>
<dbReference type="PROSITE" id="PS51180">
    <property type="entry name" value="BRO1"/>
    <property type="match status" value="1"/>
</dbReference>
<feature type="chain" id="PRO_0000218869" description="Vacuolar protein-sorting protein bro1">
    <location>
        <begin position="1"/>
        <end position="775"/>
    </location>
</feature>
<feature type="domain" description="BRO1" evidence="3">
    <location>
        <begin position="7"/>
        <end position="414"/>
    </location>
</feature>
<feature type="region of interest" description="Disordered" evidence="4">
    <location>
        <begin position="755"/>
        <end position="775"/>
    </location>
</feature>
<feature type="coiled-coil region" evidence="2">
    <location>
        <begin position="574"/>
        <end position="601"/>
    </location>
</feature>
<feature type="compositionally biased region" description="Low complexity" evidence="4">
    <location>
        <begin position="755"/>
        <end position="768"/>
    </location>
</feature>
<comment type="function">
    <text evidence="1">Involved in concentration and sorting of cargo proteins of the multivesicular body (MVB) for incorporation into intralumenal vesicles.</text>
</comment>
<comment type="subcellular location">
    <subcellularLocation>
        <location evidence="1">Cytoplasm</location>
    </subcellularLocation>
    <subcellularLocation>
        <location evidence="1">Endosome</location>
    </subcellularLocation>
</comment>
<comment type="similarity">
    <text evidence="5">Belongs to the BRO1 family.</text>
</comment>